<gene>
    <name evidence="1" type="primary">dapF</name>
    <name type="ordered locus">CBUD_2069</name>
</gene>
<comment type="function">
    <text evidence="1">Catalyzes the stereoinversion of LL-2,6-diaminopimelate (L,L-DAP) to meso-diaminopimelate (meso-DAP), a precursor of L-lysine and an essential component of the bacterial peptidoglycan.</text>
</comment>
<comment type="catalytic activity">
    <reaction evidence="1">
        <text>(2S,6S)-2,6-diaminopimelate = meso-2,6-diaminopimelate</text>
        <dbReference type="Rhea" id="RHEA:15393"/>
        <dbReference type="ChEBI" id="CHEBI:57609"/>
        <dbReference type="ChEBI" id="CHEBI:57791"/>
        <dbReference type="EC" id="5.1.1.7"/>
    </reaction>
</comment>
<comment type="pathway">
    <text evidence="1">Amino-acid biosynthesis; L-lysine biosynthesis via DAP pathway; DL-2,6-diaminopimelate from LL-2,6-diaminopimelate: step 1/1.</text>
</comment>
<comment type="subunit">
    <text evidence="1">Homodimer.</text>
</comment>
<comment type="subcellular location">
    <subcellularLocation>
        <location evidence="1">Cytoplasm</location>
    </subcellularLocation>
</comment>
<comment type="similarity">
    <text evidence="1">Belongs to the diaminopimelate epimerase family.</text>
</comment>
<accession>A9KGY8</accession>
<organism>
    <name type="scientific">Coxiella burnetii (strain Dugway 5J108-111)</name>
    <dbReference type="NCBI Taxonomy" id="434922"/>
    <lineage>
        <taxon>Bacteria</taxon>
        <taxon>Pseudomonadati</taxon>
        <taxon>Pseudomonadota</taxon>
        <taxon>Gammaproteobacteria</taxon>
        <taxon>Legionellales</taxon>
        <taxon>Coxiellaceae</taxon>
        <taxon>Coxiella</taxon>
    </lineage>
</organism>
<reference key="1">
    <citation type="journal article" date="2009" name="Infect. Immun.">
        <title>Comparative genomics reveal extensive transposon-mediated genomic plasticity and diversity among potential effector proteins within the genus Coxiella.</title>
        <authorList>
            <person name="Beare P.A."/>
            <person name="Unsworth N."/>
            <person name="Andoh M."/>
            <person name="Voth D.E."/>
            <person name="Omsland A."/>
            <person name="Gilk S.D."/>
            <person name="Williams K.P."/>
            <person name="Sobral B.W."/>
            <person name="Kupko J.J. III"/>
            <person name="Porcella S.F."/>
            <person name="Samuel J.E."/>
            <person name="Heinzen R.A."/>
        </authorList>
    </citation>
    <scope>NUCLEOTIDE SEQUENCE [LARGE SCALE GENOMIC DNA]</scope>
    <source>
        <strain>Dugway 5J108-111</strain>
    </source>
</reference>
<keyword id="KW-0028">Amino-acid biosynthesis</keyword>
<keyword id="KW-0963">Cytoplasm</keyword>
<keyword id="KW-0413">Isomerase</keyword>
<keyword id="KW-0457">Lysine biosynthesis</keyword>
<proteinExistence type="inferred from homology"/>
<evidence type="ECO:0000255" key="1">
    <source>
        <dbReference type="HAMAP-Rule" id="MF_00197"/>
    </source>
</evidence>
<sequence>MKVNFTKMQGSGNDFVVIDATKTPFQLTTSQIQKMANRRFGVGFDQLLVIEPPKNNSVDFHFRIFNADGSEVGQCGNGARCIARFIRAHQLSDREELRVSTLNEVLELKIQPDGKVSVKMGVPRFEPTEIPFIASGVANFYDIAVDNQIVKLGVVNIGNPHAIIPVERINAEEVGKLGARLSVHECFPEGANVGFMQVIDPQNIRLRVYERGTGETLACGSNACAAVAVGRRCGLLQERVVVSQPGGSLTIDWQGPLTPVTMTGPATTVFCGEWLD</sequence>
<dbReference type="EC" id="5.1.1.7" evidence="1"/>
<dbReference type="EMBL" id="CP000733">
    <property type="protein sequence ID" value="ABS77233.1"/>
    <property type="molecule type" value="Genomic_DNA"/>
</dbReference>
<dbReference type="RefSeq" id="WP_005769680.1">
    <property type="nucleotide sequence ID" value="NC_009727.1"/>
</dbReference>
<dbReference type="SMR" id="A9KGY8"/>
<dbReference type="KEGG" id="cbd:CBUD_2069"/>
<dbReference type="HOGENOM" id="CLU_053306_1_1_6"/>
<dbReference type="UniPathway" id="UPA00034">
    <property type="reaction ID" value="UER00025"/>
</dbReference>
<dbReference type="Proteomes" id="UP000008555">
    <property type="component" value="Chromosome"/>
</dbReference>
<dbReference type="GO" id="GO:0005829">
    <property type="term" value="C:cytosol"/>
    <property type="evidence" value="ECO:0007669"/>
    <property type="project" value="TreeGrafter"/>
</dbReference>
<dbReference type="GO" id="GO:0008837">
    <property type="term" value="F:diaminopimelate epimerase activity"/>
    <property type="evidence" value="ECO:0007669"/>
    <property type="project" value="UniProtKB-UniRule"/>
</dbReference>
<dbReference type="GO" id="GO:0009089">
    <property type="term" value="P:lysine biosynthetic process via diaminopimelate"/>
    <property type="evidence" value="ECO:0007669"/>
    <property type="project" value="UniProtKB-UniRule"/>
</dbReference>
<dbReference type="FunFam" id="3.10.310.10:FF:000001">
    <property type="entry name" value="Diaminopimelate epimerase"/>
    <property type="match status" value="1"/>
</dbReference>
<dbReference type="Gene3D" id="3.10.310.10">
    <property type="entry name" value="Diaminopimelate Epimerase, Chain A, domain 1"/>
    <property type="match status" value="2"/>
</dbReference>
<dbReference type="HAMAP" id="MF_00197">
    <property type="entry name" value="DAP_epimerase"/>
    <property type="match status" value="1"/>
</dbReference>
<dbReference type="InterPro" id="IPR018510">
    <property type="entry name" value="DAP_epimerase_AS"/>
</dbReference>
<dbReference type="InterPro" id="IPR001653">
    <property type="entry name" value="DAP_epimerase_DapF"/>
</dbReference>
<dbReference type="NCBIfam" id="TIGR00652">
    <property type="entry name" value="DapF"/>
    <property type="match status" value="1"/>
</dbReference>
<dbReference type="PANTHER" id="PTHR31689:SF0">
    <property type="entry name" value="DIAMINOPIMELATE EPIMERASE"/>
    <property type="match status" value="1"/>
</dbReference>
<dbReference type="PANTHER" id="PTHR31689">
    <property type="entry name" value="DIAMINOPIMELATE EPIMERASE, CHLOROPLASTIC"/>
    <property type="match status" value="1"/>
</dbReference>
<dbReference type="Pfam" id="PF01678">
    <property type="entry name" value="DAP_epimerase"/>
    <property type="match status" value="2"/>
</dbReference>
<dbReference type="SUPFAM" id="SSF54506">
    <property type="entry name" value="Diaminopimelate epimerase-like"/>
    <property type="match status" value="2"/>
</dbReference>
<dbReference type="PROSITE" id="PS01326">
    <property type="entry name" value="DAP_EPIMERASE"/>
    <property type="match status" value="1"/>
</dbReference>
<feature type="chain" id="PRO_1000077695" description="Diaminopimelate epimerase">
    <location>
        <begin position="1"/>
        <end position="276"/>
    </location>
</feature>
<feature type="active site" description="Proton donor" evidence="1">
    <location>
        <position position="75"/>
    </location>
</feature>
<feature type="active site" description="Proton acceptor" evidence="1">
    <location>
        <position position="219"/>
    </location>
</feature>
<feature type="binding site" evidence="1">
    <location>
        <position position="13"/>
    </location>
    <ligand>
        <name>substrate</name>
    </ligand>
</feature>
<feature type="binding site" evidence="1">
    <location>
        <position position="46"/>
    </location>
    <ligand>
        <name>substrate</name>
    </ligand>
</feature>
<feature type="binding site" evidence="1">
    <location>
        <position position="66"/>
    </location>
    <ligand>
        <name>substrate</name>
    </ligand>
</feature>
<feature type="binding site" evidence="1">
    <location>
        <begin position="76"/>
        <end position="77"/>
    </location>
    <ligand>
        <name>substrate</name>
    </ligand>
</feature>
<feature type="binding site" evidence="1">
    <location>
        <position position="159"/>
    </location>
    <ligand>
        <name>substrate</name>
    </ligand>
</feature>
<feature type="binding site" evidence="1">
    <location>
        <position position="192"/>
    </location>
    <ligand>
        <name>substrate</name>
    </ligand>
</feature>
<feature type="binding site" evidence="1">
    <location>
        <begin position="210"/>
        <end position="211"/>
    </location>
    <ligand>
        <name>substrate</name>
    </ligand>
</feature>
<feature type="binding site" evidence="1">
    <location>
        <begin position="220"/>
        <end position="221"/>
    </location>
    <ligand>
        <name>substrate</name>
    </ligand>
</feature>
<feature type="site" description="Could be important to modulate the pK values of the two catalytic cysteine residues" evidence="1">
    <location>
        <position position="161"/>
    </location>
</feature>
<feature type="site" description="Could be important to modulate the pK values of the two catalytic cysteine residues" evidence="1">
    <location>
        <position position="210"/>
    </location>
</feature>
<feature type="site" description="Important for dimerization" evidence="1">
    <location>
        <position position="270"/>
    </location>
</feature>
<protein>
    <recommendedName>
        <fullName evidence="1">Diaminopimelate epimerase</fullName>
        <shortName evidence="1">DAP epimerase</shortName>
        <ecNumber evidence="1">5.1.1.7</ecNumber>
    </recommendedName>
    <alternativeName>
        <fullName evidence="1">PLP-independent amino acid racemase</fullName>
    </alternativeName>
</protein>
<name>DAPF_COXBN</name>